<feature type="chain" id="PRO_0000344782" description="Large ribosomal subunit protein bL36c">
    <location>
        <begin position="1"/>
        <end position="48"/>
    </location>
</feature>
<accession>A6MW19</accession>
<geneLocation type="chloroplast"/>
<reference key="1">
    <citation type="journal article" date="2007" name="Mol. Biol. Evol.">
        <title>Plastid genome sequence of the cryptophyte alga Rhodomonas salina CCMP1319: lateral transfer of putative DNA replication machinery and a test of chromist plastid phylogeny.</title>
        <authorList>
            <person name="Khan H."/>
            <person name="Parks N."/>
            <person name="Kozera C."/>
            <person name="Curtis B.A."/>
            <person name="Parsons B.J."/>
            <person name="Bowman S."/>
            <person name="Archibald J.M."/>
        </authorList>
    </citation>
    <scope>NUCLEOTIDE SEQUENCE [LARGE SCALE GENOMIC DNA]</scope>
    <source>
        <strain>CCMP1319 / NEPCC76 / CS-174</strain>
    </source>
</reference>
<evidence type="ECO:0000255" key="1">
    <source>
        <dbReference type="HAMAP-Rule" id="MF_00251"/>
    </source>
</evidence>
<evidence type="ECO:0000305" key="2"/>
<gene>
    <name evidence="1" type="primary">rpl36</name>
</gene>
<name>RK36_RHDSA</name>
<dbReference type="EMBL" id="EF508371">
    <property type="protein sequence ID" value="ABO70782.1"/>
    <property type="molecule type" value="Genomic_DNA"/>
</dbReference>
<dbReference type="RefSeq" id="YP_001293598.1">
    <property type="nucleotide sequence ID" value="NC_009573.1"/>
</dbReference>
<dbReference type="SMR" id="A6MW19"/>
<dbReference type="GeneID" id="5228518"/>
<dbReference type="GO" id="GO:0009507">
    <property type="term" value="C:chloroplast"/>
    <property type="evidence" value="ECO:0007669"/>
    <property type="project" value="UniProtKB-SubCell"/>
</dbReference>
<dbReference type="GO" id="GO:1990904">
    <property type="term" value="C:ribonucleoprotein complex"/>
    <property type="evidence" value="ECO:0007669"/>
    <property type="project" value="UniProtKB-KW"/>
</dbReference>
<dbReference type="GO" id="GO:0005840">
    <property type="term" value="C:ribosome"/>
    <property type="evidence" value="ECO:0007669"/>
    <property type="project" value="UniProtKB-KW"/>
</dbReference>
<dbReference type="GO" id="GO:0003735">
    <property type="term" value="F:structural constituent of ribosome"/>
    <property type="evidence" value="ECO:0007669"/>
    <property type="project" value="InterPro"/>
</dbReference>
<dbReference type="GO" id="GO:0006412">
    <property type="term" value="P:translation"/>
    <property type="evidence" value="ECO:0007669"/>
    <property type="project" value="UniProtKB-UniRule"/>
</dbReference>
<dbReference type="HAMAP" id="MF_00251">
    <property type="entry name" value="Ribosomal_bL36"/>
    <property type="match status" value="1"/>
</dbReference>
<dbReference type="InterPro" id="IPR000473">
    <property type="entry name" value="Ribosomal_bL36"/>
</dbReference>
<dbReference type="InterPro" id="IPR035977">
    <property type="entry name" value="Ribosomal_bL36_sp"/>
</dbReference>
<dbReference type="InterPro" id="IPR047621">
    <property type="entry name" value="Ribosomal_L36_bact"/>
</dbReference>
<dbReference type="NCBIfam" id="NF002021">
    <property type="entry name" value="PRK00831.1"/>
    <property type="match status" value="1"/>
</dbReference>
<dbReference type="NCBIfam" id="TIGR01022">
    <property type="entry name" value="rpmJ_bact"/>
    <property type="match status" value="1"/>
</dbReference>
<dbReference type="PANTHER" id="PTHR47781">
    <property type="entry name" value="50S RIBOSOMAL PROTEIN L36 2"/>
    <property type="match status" value="1"/>
</dbReference>
<dbReference type="PANTHER" id="PTHR47781:SF1">
    <property type="entry name" value="LARGE RIBOSOMAL SUBUNIT PROTEIN BL36B"/>
    <property type="match status" value="1"/>
</dbReference>
<dbReference type="Pfam" id="PF00444">
    <property type="entry name" value="Ribosomal_L36"/>
    <property type="match status" value="1"/>
</dbReference>
<dbReference type="SUPFAM" id="SSF57840">
    <property type="entry name" value="Ribosomal protein L36"/>
    <property type="match status" value="1"/>
</dbReference>
<dbReference type="PROSITE" id="PS00828">
    <property type="entry name" value="RIBOSOMAL_L36"/>
    <property type="match status" value="1"/>
</dbReference>
<sequence>MKVVSSIGSLKNRSKDCQVVKRRGRLYVICKSDPRLKVRQGGAKMKRK</sequence>
<comment type="subcellular location">
    <subcellularLocation>
        <location>Plastid</location>
        <location>Chloroplast</location>
    </subcellularLocation>
</comment>
<comment type="similarity">
    <text evidence="1">Belongs to the bacterial ribosomal protein bL36 family.</text>
</comment>
<organism>
    <name type="scientific">Rhodomonas salina</name>
    <name type="common">Cryptomonas salina</name>
    <dbReference type="NCBI Taxonomy" id="52970"/>
    <lineage>
        <taxon>Eukaryota</taxon>
        <taxon>Cryptophyceae</taxon>
        <taxon>Pyrenomonadales</taxon>
        <taxon>Pyrenomonadaceae</taxon>
        <taxon>Rhodomonas</taxon>
    </lineage>
</organism>
<keyword id="KW-0150">Chloroplast</keyword>
<keyword id="KW-0934">Plastid</keyword>
<keyword id="KW-0687">Ribonucleoprotein</keyword>
<keyword id="KW-0689">Ribosomal protein</keyword>
<protein>
    <recommendedName>
        <fullName evidence="1">Large ribosomal subunit protein bL36c</fullName>
    </recommendedName>
    <alternativeName>
        <fullName evidence="2">50S ribosomal protein L36, chloroplastic</fullName>
    </alternativeName>
</protein>
<proteinExistence type="inferred from homology"/>